<dbReference type="EMBL" id="LT708304">
    <property type="protein sequence ID" value="SIU01717.1"/>
    <property type="molecule type" value="Genomic_DNA"/>
</dbReference>
<dbReference type="RefSeq" id="NP_856737.1">
    <property type="nucleotide sequence ID" value="NC_002945.3"/>
</dbReference>
<dbReference type="RefSeq" id="WP_003415995.1">
    <property type="nucleotide sequence ID" value="NC_002945.4"/>
</dbReference>
<dbReference type="SMR" id="P69927"/>
<dbReference type="GeneID" id="45427058"/>
<dbReference type="KEGG" id="mbo:BQ2027_MB3092"/>
<dbReference type="PATRIC" id="fig|233413.5.peg.3397"/>
<dbReference type="Proteomes" id="UP000001419">
    <property type="component" value="Chromosome"/>
</dbReference>
<dbReference type="GO" id="GO:0005886">
    <property type="term" value="C:plasma membrane"/>
    <property type="evidence" value="ECO:0007669"/>
    <property type="project" value="UniProtKB-SubCell"/>
</dbReference>
<dbReference type="GO" id="GO:0022857">
    <property type="term" value="F:transmembrane transporter activity"/>
    <property type="evidence" value="ECO:0007669"/>
    <property type="project" value="InterPro"/>
</dbReference>
<dbReference type="GO" id="GO:0046677">
    <property type="term" value="P:response to antibiotic"/>
    <property type="evidence" value="ECO:0007669"/>
    <property type="project" value="UniProtKB-KW"/>
</dbReference>
<dbReference type="FunFam" id="1.10.3730.20:FF:000001">
    <property type="entry name" value="Quaternary ammonium compound resistance transporter SugE"/>
    <property type="match status" value="1"/>
</dbReference>
<dbReference type="Gene3D" id="1.10.3730.20">
    <property type="match status" value="1"/>
</dbReference>
<dbReference type="InterPro" id="IPR000390">
    <property type="entry name" value="Small_drug/metabolite_transptr"/>
</dbReference>
<dbReference type="InterPro" id="IPR045324">
    <property type="entry name" value="Small_multidrug_res"/>
</dbReference>
<dbReference type="PANTHER" id="PTHR30561:SF1">
    <property type="entry name" value="MULTIDRUG TRANSPORTER EMRE"/>
    <property type="match status" value="1"/>
</dbReference>
<dbReference type="PANTHER" id="PTHR30561">
    <property type="entry name" value="SMR FAMILY PROTON-DEPENDENT DRUG EFFLUX TRANSPORTER SUGE"/>
    <property type="match status" value="1"/>
</dbReference>
<dbReference type="Pfam" id="PF00893">
    <property type="entry name" value="Multi_Drug_Res"/>
    <property type="match status" value="1"/>
</dbReference>
<dbReference type="SUPFAM" id="SSF103481">
    <property type="entry name" value="Multidrug resistance efflux transporter EmrE"/>
    <property type="match status" value="1"/>
</dbReference>
<reference key="1">
    <citation type="journal article" date="2003" name="Proc. Natl. Acad. Sci. U.S.A.">
        <title>The complete genome sequence of Mycobacterium bovis.</title>
        <authorList>
            <person name="Garnier T."/>
            <person name="Eiglmeier K."/>
            <person name="Camus J.-C."/>
            <person name="Medina N."/>
            <person name="Mansoor H."/>
            <person name="Pryor M."/>
            <person name="Duthoy S."/>
            <person name="Grondin S."/>
            <person name="Lacroix C."/>
            <person name="Monsempe C."/>
            <person name="Simon S."/>
            <person name="Harris B."/>
            <person name="Atkin R."/>
            <person name="Doggett J."/>
            <person name="Mayes R."/>
            <person name="Keating L."/>
            <person name="Wheeler P.R."/>
            <person name="Parkhill J."/>
            <person name="Barrell B.G."/>
            <person name="Cole S.T."/>
            <person name="Gordon S.V."/>
            <person name="Hewinson R.G."/>
        </authorList>
    </citation>
    <scope>NUCLEOTIDE SEQUENCE [LARGE SCALE GENOMIC DNA]</scope>
    <source>
        <strain>ATCC BAA-935 / AF2122/97</strain>
    </source>
</reference>
<reference key="2">
    <citation type="journal article" date="2017" name="Genome Announc.">
        <title>Updated reference genome sequence and annotation of Mycobacterium bovis AF2122/97.</title>
        <authorList>
            <person name="Malone K.M."/>
            <person name="Farrell D."/>
            <person name="Stuber T.P."/>
            <person name="Schubert O.T."/>
            <person name="Aebersold R."/>
            <person name="Robbe-Austerman S."/>
            <person name="Gordon S.V."/>
        </authorList>
    </citation>
    <scope>NUCLEOTIDE SEQUENCE [LARGE SCALE GENOMIC DNA]</scope>
    <scope>GENOME REANNOTATION</scope>
    <source>
        <strain>ATCC BAA-935 / AF2122/97</strain>
    </source>
</reference>
<proteinExistence type="inferred from homology"/>
<accession>P69927</accession>
<accession>A0A1R3Y365</accession>
<accession>P95094</accession>
<accession>X2BN92</accession>
<comment type="function">
    <text evidence="1">Multidrug efflux pump. Confers resistance to tetraphenylphosphonium (TPP), erythromycin, ethidium bromide, acriflavine, safranin O and pyronin Y (By similarity).</text>
</comment>
<comment type="subcellular location">
    <subcellularLocation>
        <location evidence="3">Cell membrane</location>
        <topology evidence="3">Multi-pass membrane protein</topology>
    </subcellularLocation>
</comment>
<comment type="similarity">
    <text evidence="3">Belongs to the drug/metabolite transporter (DMT) superfamily. Small multidrug resistance (SMR) (TC 2.A.7.1) family. Mmr subfamily.</text>
</comment>
<feature type="chain" id="PRO_0000108117" description="Multidrug resistance protein mmr">
    <location>
        <begin position="1"/>
        <end position="107"/>
    </location>
</feature>
<feature type="transmembrane region" description="Helical" evidence="2">
    <location>
        <begin position="2"/>
        <end position="19"/>
    </location>
</feature>
<feature type="transmembrane region" description="Helical" evidence="2">
    <location>
        <begin position="29"/>
        <end position="51"/>
    </location>
</feature>
<feature type="transmembrane region" description="Helical" evidence="2">
    <location>
        <begin position="58"/>
        <end position="80"/>
    </location>
</feature>
<feature type="transmembrane region" description="Helical" evidence="2">
    <location>
        <begin position="84"/>
        <end position="106"/>
    </location>
</feature>
<protein>
    <recommendedName>
        <fullName>Multidrug resistance protein mmr</fullName>
    </recommendedName>
</protein>
<sequence>MIYLYLLCAIFAEVVATSLLKSTEGFTRLWPTVGCLVGYGIAFALLALSISHGMQTDVAYALWSAIGTAAIVLVAVLFLGSPISVMKVVGVGLIVVGVVTLNLAGAH</sequence>
<gene>
    <name type="primary">mmr</name>
    <name type="ordered locus">BQ2027_MB3092</name>
</gene>
<evidence type="ECO:0000250" key="1"/>
<evidence type="ECO:0000255" key="2"/>
<evidence type="ECO:0000305" key="3"/>
<name>MMR_MYCBO</name>
<keyword id="KW-0046">Antibiotic resistance</keyword>
<keyword id="KW-1003">Cell membrane</keyword>
<keyword id="KW-0472">Membrane</keyword>
<keyword id="KW-1185">Reference proteome</keyword>
<keyword id="KW-0812">Transmembrane</keyword>
<keyword id="KW-1133">Transmembrane helix</keyword>
<keyword id="KW-0813">Transport</keyword>
<organism>
    <name type="scientific">Mycobacterium bovis (strain ATCC BAA-935 / AF2122/97)</name>
    <dbReference type="NCBI Taxonomy" id="233413"/>
    <lineage>
        <taxon>Bacteria</taxon>
        <taxon>Bacillati</taxon>
        <taxon>Actinomycetota</taxon>
        <taxon>Actinomycetes</taxon>
        <taxon>Mycobacteriales</taxon>
        <taxon>Mycobacteriaceae</taxon>
        <taxon>Mycobacterium</taxon>
        <taxon>Mycobacterium tuberculosis complex</taxon>
    </lineage>
</organism>